<gene>
    <name evidence="1" type="primary">ybeY</name>
    <name type="ordered locus">BBR47_20630</name>
</gene>
<proteinExistence type="inferred from homology"/>
<reference key="1">
    <citation type="submission" date="2005-03" db="EMBL/GenBank/DDBJ databases">
        <title>Brevibacillus brevis strain 47, complete genome.</title>
        <authorList>
            <person name="Hosoyama A."/>
            <person name="Yamada R."/>
            <person name="Hongo Y."/>
            <person name="Terui Y."/>
            <person name="Ankai A."/>
            <person name="Masuyama W."/>
            <person name="Sekiguchi M."/>
            <person name="Takeda T."/>
            <person name="Asano K."/>
            <person name="Ohji S."/>
            <person name="Ichikawa N."/>
            <person name="Narita S."/>
            <person name="Aoki N."/>
            <person name="Miura H."/>
            <person name="Matsushita S."/>
            <person name="Sekigawa T."/>
            <person name="Yamagata H."/>
            <person name="Yoshikawa H."/>
            <person name="Udaka S."/>
            <person name="Tanikawa S."/>
            <person name="Fujita N."/>
        </authorList>
    </citation>
    <scope>NUCLEOTIDE SEQUENCE [LARGE SCALE GENOMIC DNA]</scope>
    <source>
        <strain>47 / JCM 6285 / NBRC 100599</strain>
    </source>
</reference>
<accession>C0ZB81</accession>
<feature type="chain" id="PRO_1000199958" description="Endoribonuclease YbeY">
    <location>
        <begin position="1"/>
        <end position="159"/>
    </location>
</feature>
<feature type="binding site" evidence="1">
    <location>
        <position position="125"/>
    </location>
    <ligand>
        <name>Zn(2+)</name>
        <dbReference type="ChEBI" id="CHEBI:29105"/>
        <note>catalytic</note>
    </ligand>
</feature>
<feature type="binding site" evidence="1">
    <location>
        <position position="129"/>
    </location>
    <ligand>
        <name>Zn(2+)</name>
        <dbReference type="ChEBI" id="CHEBI:29105"/>
        <note>catalytic</note>
    </ligand>
</feature>
<feature type="binding site" evidence="1">
    <location>
        <position position="135"/>
    </location>
    <ligand>
        <name>Zn(2+)</name>
        <dbReference type="ChEBI" id="CHEBI:29105"/>
        <note>catalytic</note>
    </ligand>
</feature>
<evidence type="ECO:0000255" key="1">
    <source>
        <dbReference type="HAMAP-Rule" id="MF_00009"/>
    </source>
</evidence>
<organism>
    <name type="scientific">Brevibacillus brevis (strain 47 / JCM 6285 / NBRC 100599)</name>
    <dbReference type="NCBI Taxonomy" id="358681"/>
    <lineage>
        <taxon>Bacteria</taxon>
        <taxon>Bacillati</taxon>
        <taxon>Bacillota</taxon>
        <taxon>Bacilli</taxon>
        <taxon>Bacillales</taxon>
        <taxon>Paenibacillaceae</taxon>
        <taxon>Brevibacillus</taxon>
    </lineage>
</organism>
<dbReference type="EC" id="3.1.-.-" evidence="1"/>
<dbReference type="EMBL" id="AP008955">
    <property type="protein sequence ID" value="BAH43040.1"/>
    <property type="molecule type" value="Genomic_DNA"/>
</dbReference>
<dbReference type="RefSeq" id="WP_007727608.1">
    <property type="nucleotide sequence ID" value="NC_012491.1"/>
</dbReference>
<dbReference type="SMR" id="C0ZB81"/>
<dbReference type="STRING" id="358681.BBR47_20630"/>
<dbReference type="KEGG" id="bbe:BBR47_20630"/>
<dbReference type="eggNOG" id="COG0319">
    <property type="taxonomic scope" value="Bacteria"/>
</dbReference>
<dbReference type="HOGENOM" id="CLU_106710_3_0_9"/>
<dbReference type="Proteomes" id="UP000001877">
    <property type="component" value="Chromosome"/>
</dbReference>
<dbReference type="GO" id="GO:0005737">
    <property type="term" value="C:cytoplasm"/>
    <property type="evidence" value="ECO:0007669"/>
    <property type="project" value="UniProtKB-SubCell"/>
</dbReference>
<dbReference type="GO" id="GO:0004222">
    <property type="term" value="F:metalloendopeptidase activity"/>
    <property type="evidence" value="ECO:0007669"/>
    <property type="project" value="InterPro"/>
</dbReference>
<dbReference type="GO" id="GO:0004521">
    <property type="term" value="F:RNA endonuclease activity"/>
    <property type="evidence" value="ECO:0007669"/>
    <property type="project" value="UniProtKB-UniRule"/>
</dbReference>
<dbReference type="GO" id="GO:0008270">
    <property type="term" value="F:zinc ion binding"/>
    <property type="evidence" value="ECO:0007669"/>
    <property type="project" value="UniProtKB-UniRule"/>
</dbReference>
<dbReference type="GO" id="GO:0006364">
    <property type="term" value="P:rRNA processing"/>
    <property type="evidence" value="ECO:0007669"/>
    <property type="project" value="UniProtKB-UniRule"/>
</dbReference>
<dbReference type="Gene3D" id="3.40.390.30">
    <property type="entry name" value="Metalloproteases ('zincins'), catalytic domain"/>
    <property type="match status" value="1"/>
</dbReference>
<dbReference type="HAMAP" id="MF_00009">
    <property type="entry name" value="Endoribonucl_YbeY"/>
    <property type="match status" value="1"/>
</dbReference>
<dbReference type="InterPro" id="IPR023091">
    <property type="entry name" value="MetalPrtase_cat_dom_sf_prd"/>
</dbReference>
<dbReference type="InterPro" id="IPR002036">
    <property type="entry name" value="YbeY"/>
</dbReference>
<dbReference type="InterPro" id="IPR020549">
    <property type="entry name" value="YbeY_CS"/>
</dbReference>
<dbReference type="NCBIfam" id="TIGR00043">
    <property type="entry name" value="rRNA maturation RNase YbeY"/>
    <property type="match status" value="1"/>
</dbReference>
<dbReference type="PANTHER" id="PTHR46986">
    <property type="entry name" value="ENDORIBONUCLEASE YBEY, CHLOROPLASTIC"/>
    <property type="match status" value="1"/>
</dbReference>
<dbReference type="PANTHER" id="PTHR46986:SF1">
    <property type="entry name" value="ENDORIBONUCLEASE YBEY, CHLOROPLASTIC"/>
    <property type="match status" value="1"/>
</dbReference>
<dbReference type="Pfam" id="PF02130">
    <property type="entry name" value="YbeY"/>
    <property type="match status" value="1"/>
</dbReference>
<dbReference type="SUPFAM" id="SSF55486">
    <property type="entry name" value="Metalloproteases ('zincins'), catalytic domain"/>
    <property type="match status" value="1"/>
</dbReference>
<dbReference type="PROSITE" id="PS01306">
    <property type="entry name" value="UPF0054"/>
    <property type="match status" value="1"/>
</dbReference>
<comment type="function">
    <text evidence="1">Single strand-specific metallo-endoribonuclease involved in late-stage 70S ribosome quality control and in maturation of the 3' terminus of the 16S rRNA.</text>
</comment>
<comment type="cofactor">
    <cofactor evidence="1">
        <name>Zn(2+)</name>
        <dbReference type="ChEBI" id="CHEBI:29105"/>
    </cofactor>
    <text evidence="1">Binds 1 zinc ion.</text>
</comment>
<comment type="subcellular location">
    <subcellularLocation>
        <location evidence="1">Cytoplasm</location>
    </subcellularLocation>
</comment>
<comment type="similarity">
    <text evidence="1">Belongs to the endoribonuclease YbeY family.</text>
</comment>
<sequence length="159" mass="18204">MLSVEILHEEIEPIDENLQNLLVRCLEAAAKLEEVQGEVVVTLVNNERIHELNRDYRGVDRPTDVLSFAMNEPGEGEMEIFIDEDEASEFPNMLGDIIISVPKAHEQAEDYGHSFERELGFLTVHGFLHLLGYDHGTPEEEKEMFSRQEKVLEEIGLTR</sequence>
<name>YBEY_BREBN</name>
<keyword id="KW-0963">Cytoplasm</keyword>
<keyword id="KW-0255">Endonuclease</keyword>
<keyword id="KW-0378">Hydrolase</keyword>
<keyword id="KW-0479">Metal-binding</keyword>
<keyword id="KW-0540">Nuclease</keyword>
<keyword id="KW-1185">Reference proteome</keyword>
<keyword id="KW-0690">Ribosome biogenesis</keyword>
<keyword id="KW-0698">rRNA processing</keyword>
<keyword id="KW-0862">Zinc</keyword>
<protein>
    <recommendedName>
        <fullName evidence="1">Endoribonuclease YbeY</fullName>
        <ecNumber evidence="1">3.1.-.-</ecNumber>
    </recommendedName>
</protein>